<reference key="1">
    <citation type="journal article" date="2006" name="Nature">
        <title>Insights from the genome of the biotrophic fungal plant pathogen Ustilago maydis.</title>
        <authorList>
            <person name="Kaemper J."/>
            <person name="Kahmann R."/>
            <person name="Boelker M."/>
            <person name="Ma L.-J."/>
            <person name="Brefort T."/>
            <person name="Saville B.J."/>
            <person name="Banuett F."/>
            <person name="Kronstad J.W."/>
            <person name="Gold S.E."/>
            <person name="Mueller O."/>
            <person name="Perlin M.H."/>
            <person name="Woesten H.A.B."/>
            <person name="de Vries R."/>
            <person name="Ruiz-Herrera J."/>
            <person name="Reynaga-Pena C.G."/>
            <person name="Snetselaar K."/>
            <person name="McCann M."/>
            <person name="Perez-Martin J."/>
            <person name="Feldbruegge M."/>
            <person name="Basse C.W."/>
            <person name="Steinberg G."/>
            <person name="Ibeas J.I."/>
            <person name="Holloman W."/>
            <person name="Guzman P."/>
            <person name="Farman M.L."/>
            <person name="Stajich J.E."/>
            <person name="Sentandreu R."/>
            <person name="Gonzalez-Prieto J.M."/>
            <person name="Kennell J.C."/>
            <person name="Molina L."/>
            <person name="Schirawski J."/>
            <person name="Mendoza-Mendoza A."/>
            <person name="Greilinger D."/>
            <person name="Muench K."/>
            <person name="Roessel N."/>
            <person name="Scherer M."/>
            <person name="Vranes M."/>
            <person name="Ladendorf O."/>
            <person name="Vincon V."/>
            <person name="Fuchs U."/>
            <person name="Sandrock B."/>
            <person name="Meng S."/>
            <person name="Ho E.C.H."/>
            <person name="Cahill M.J."/>
            <person name="Boyce K.J."/>
            <person name="Klose J."/>
            <person name="Klosterman S.J."/>
            <person name="Deelstra H.J."/>
            <person name="Ortiz-Castellanos L."/>
            <person name="Li W."/>
            <person name="Sanchez-Alonso P."/>
            <person name="Schreier P.H."/>
            <person name="Haeuser-Hahn I."/>
            <person name="Vaupel M."/>
            <person name="Koopmann E."/>
            <person name="Friedrich G."/>
            <person name="Voss H."/>
            <person name="Schlueter T."/>
            <person name="Margolis J."/>
            <person name="Platt D."/>
            <person name="Swimmer C."/>
            <person name="Gnirke A."/>
            <person name="Chen F."/>
            <person name="Vysotskaia V."/>
            <person name="Mannhaupt G."/>
            <person name="Gueldener U."/>
            <person name="Muensterkoetter M."/>
            <person name="Haase D."/>
            <person name="Oesterheld M."/>
            <person name="Mewes H.-W."/>
            <person name="Mauceli E.W."/>
            <person name="DeCaprio D."/>
            <person name="Wade C.M."/>
            <person name="Butler J."/>
            <person name="Young S.K."/>
            <person name="Jaffe D.B."/>
            <person name="Calvo S.E."/>
            <person name="Nusbaum C."/>
            <person name="Galagan J.E."/>
            <person name="Birren B.W."/>
        </authorList>
    </citation>
    <scope>NUCLEOTIDE SEQUENCE [LARGE SCALE GENOMIC DNA]</scope>
    <source>
        <strain>DSM 14603 / FGSC 9021 / UM521</strain>
    </source>
</reference>
<reference key="2">
    <citation type="submission" date="2014-09" db="EMBL/GenBank/DDBJ databases">
        <authorList>
            <person name="Gueldener U."/>
            <person name="Muensterkoetter M."/>
            <person name="Walter M.C."/>
            <person name="Mannhaupt G."/>
            <person name="Kahmann R."/>
        </authorList>
    </citation>
    <scope>GENOME REANNOTATION</scope>
    <source>
        <strain>DSM 14603 / FGSC 9021 / UM521</strain>
    </source>
</reference>
<evidence type="ECO:0000250" key="1"/>
<evidence type="ECO:0000255" key="2"/>
<evidence type="ECO:0000255" key="3">
    <source>
        <dbReference type="PROSITE-ProRule" id="PRU00192"/>
    </source>
</evidence>
<evidence type="ECO:0000256" key="4">
    <source>
        <dbReference type="SAM" id="MobiDB-lite"/>
    </source>
</evidence>
<evidence type="ECO:0000305" key="5"/>
<sequence length="335" mass="34178">MPSKRGGSGGLDIGLIFAHKILTVLFILSTVGWIVAFIGQCAAEADGVGRQGVLWFAIFLQLFLIIGKYLGVMSDSLGTSRLQLTAFTAVALVFSVFGINSGIYSSNSADEAVAAGWFLITIANVIWLLFLTTEEDSVLYPIVNIANAGITPPAARTSSRYNGAGGAGSGGQSMRMAGSGGVGTGLGGGYGAGNGSAYGGFQGGSGYQPAYGNSPSAADITTANGTGLGAPKISSASIRSRGANDAGATQDAPSVASHGAPASPAQVGSKSTDLPDYGYKARALYAYQANADDPTEISFSKGEVLDIVDNSGKWWQARRSNGETGIVPSNYMQLL</sequence>
<accession>Q4P9Q7</accession>
<accession>A0A0D1DWN8</accession>
<feature type="chain" id="PRO_0000410404" description="High osmolarity signaling protein SHO1">
    <location>
        <begin position="1"/>
        <end position="335"/>
    </location>
</feature>
<feature type="topological domain" description="Cytoplasmic" evidence="2">
    <location>
        <begin position="1"/>
        <end position="20"/>
    </location>
</feature>
<feature type="transmembrane region" description="Helical" evidence="2">
    <location>
        <begin position="21"/>
        <end position="41"/>
    </location>
</feature>
<feature type="topological domain" description="Extracellular" evidence="2">
    <location>
        <begin position="42"/>
        <end position="52"/>
    </location>
</feature>
<feature type="transmembrane region" description="Helical" evidence="2">
    <location>
        <begin position="53"/>
        <end position="73"/>
    </location>
</feature>
<feature type="topological domain" description="Cytoplasmic" evidence="2">
    <location>
        <begin position="74"/>
        <end position="83"/>
    </location>
</feature>
<feature type="transmembrane region" description="Helical" evidence="2">
    <location>
        <begin position="84"/>
        <end position="104"/>
    </location>
</feature>
<feature type="topological domain" description="Extracellular" evidence="2">
    <location>
        <begin position="105"/>
        <end position="111"/>
    </location>
</feature>
<feature type="transmembrane region" description="Helical" evidence="2">
    <location>
        <begin position="112"/>
        <end position="132"/>
    </location>
</feature>
<feature type="topological domain" description="Cytoplasmic" evidence="2">
    <location>
        <begin position="133"/>
        <end position="335"/>
    </location>
</feature>
<feature type="domain" description="SH3" evidence="3">
    <location>
        <begin position="276"/>
        <end position="335"/>
    </location>
</feature>
<feature type="region of interest" description="Disordered" evidence="4">
    <location>
        <begin position="238"/>
        <end position="272"/>
    </location>
</feature>
<gene>
    <name type="primary">SHO1</name>
    <name type="ORF">UMAG_03156</name>
</gene>
<comment type="function">
    <text evidence="1">Plasma membrane osmosensor that activates the high osmolarity glycerol (HOG) MAPK signaling pathway in response to high osmolarity.</text>
</comment>
<comment type="subunit">
    <text evidence="1">Forms homooligomers.</text>
</comment>
<comment type="subcellular location">
    <subcellularLocation>
        <location evidence="1">Cell membrane</location>
        <topology evidence="1">Multi-pass membrane protein</topology>
    </subcellularLocation>
</comment>
<comment type="similarity">
    <text evidence="5">Belongs to the SHO1 family.</text>
</comment>
<proteinExistence type="inferred from homology"/>
<protein>
    <recommendedName>
        <fullName>High osmolarity signaling protein SHO1</fullName>
    </recommendedName>
    <alternativeName>
        <fullName>Osmosensor SHO1</fullName>
    </alternativeName>
</protein>
<keyword id="KW-1003">Cell membrane</keyword>
<keyword id="KW-0472">Membrane</keyword>
<keyword id="KW-1185">Reference proteome</keyword>
<keyword id="KW-0728">SH3 domain</keyword>
<keyword id="KW-0346">Stress response</keyword>
<keyword id="KW-0812">Transmembrane</keyword>
<keyword id="KW-1133">Transmembrane helix</keyword>
<dbReference type="EMBL" id="CM003147">
    <property type="protein sequence ID" value="KIS68584.1"/>
    <property type="molecule type" value="Genomic_DNA"/>
</dbReference>
<dbReference type="RefSeq" id="XP_011389617.1">
    <property type="nucleotide sequence ID" value="XM_011391315.1"/>
</dbReference>
<dbReference type="SMR" id="Q4P9Q7"/>
<dbReference type="STRING" id="237631.Q4P9Q7"/>
<dbReference type="EnsemblFungi" id="KIS68584">
    <property type="protein sequence ID" value="KIS68584"/>
    <property type="gene ID" value="UMAG_03156"/>
</dbReference>
<dbReference type="GeneID" id="23563706"/>
<dbReference type="KEGG" id="uma:UMAG_03156"/>
<dbReference type="VEuPathDB" id="FungiDB:UMAG_03156"/>
<dbReference type="eggNOG" id="ENOG502QW7A">
    <property type="taxonomic scope" value="Eukaryota"/>
</dbReference>
<dbReference type="HOGENOM" id="CLU_043316_0_0_1"/>
<dbReference type="InParanoid" id="Q4P9Q7"/>
<dbReference type="OMA" id="KNGKWWQ"/>
<dbReference type="OrthoDB" id="25408at2759"/>
<dbReference type="PHI-base" id="PHI:2222"/>
<dbReference type="Proteomes" id="UP000000561">
    <property type="component" value="Chromosome 8"/>
</dbReference>
<dbReference type="GO" id="GO:0005634">
    <property type="term" value="C:nucleus"/>
    <property type="evidence" value="ECO:0000318"/>
    <property type="project" value="GO_Central"/>
</dbReference>
<dbReference type="GO" id="GO:0005886">
    <property type="term" value="C:plasma membrane"/>
    <property type="evidence" value="ECO:0007669"/>
    <property type="project" value="UniProtKB-SubCell"/>
</dbReference>
<dbReference type="GO" id="GO:0000147">
    <property type="term" value="P:actin cortical patch assembly"/>
    <property type="evidence" value="ECO:0000318"/>
    <property type="project" value="GO_Central"/>
</dbReference>
<dbReference type="GO" id="GO:0030833">
    <property type="term" value="P:regulation of actin filament polymerization"/>
    <property type="evidence" value="ECO:0000318"/>
    <property type="project" value="GO_Central"/>
</dbReference>
<dbReference type="CDD" id="cd11855">
    <property type="entry name" value="SH3_Sho1p"/>
    <property type="match status" value="1"/>
</dbReference>
<dbReference type="FunFam" id="2.30.30.40:FF:000213">
    <property type="entry name" value="High osmolarity signaling protein SHO1"/>
    <property type="match status" value="1"/>
</dbReference>
<dbReference type="Gene3D" id="2.30.30.40">
    <property type="entry name" value="SH3 Domains"/>
    <property type="match status" value="1"/>
</dbReference>
<dbReference type="InterPro" id="IPR036028">
    <property type="entry name" value="SH3-like_dom_sf"/>
</dbReference>
<dbReference type="InterPro" id="IPR001452">
    <property type="entry name" value="SH3_domain"/>
</dbReference>
<dbReference type="InterPro" id="IPR035522">
    <property type="entry name" value="Sho1_SH3"/>
</dbReference>
<dbReference type="PANTHER" id="PTHR15735:SF19">
    <property type="entry name" value="ACTIN CYTOSKELETON-REGULATORY COMPLEX PROTEIN SLA1"/>
    <property type="match status" value="1"/>
</dbReference>
<dbReference type="PANTHER" id="PTHR15735">
    <property type="entry name" value="FCH AND DOUBLE SH3 DOMAINS PROTEIN"/>
    <property type="match status" value="1"/>
</dbReference>
<dbReference type="Pfam" id="PF00018">
    <property type="entry name" value="SH3_1"/>
    <property type="match status" value="1"/>
</dbReference>
<dbReference type="PRINTS" id="PR00452">
    <property type="entry name" value="SH3DOMAIN"/>
</dbReference>
<dbReference type="SMART" id="SM00326">
    <property type="entry name" value="SH3"/>
    <property type="match status" value="1"/>
</dbReference>
<dbReference type="SUPFAM" id="SSF50044">
    <property type="entry name" value="SH3-domain"/>
    <property type="match status" value="1"/>
</dbReference>
<dbReference type="PROSITE" id="PS50002">
    <property type="entry name" value="SH3"/>
    <property type="match status" value="1"/>
</dbReference>
<organism>
    <name type="scientific">Mycosarcoma maydis</name>
    <name type="common">Corn smut fungus</name>
    <name type="synonym">Ustilago maydis</name>
    <dbReference type="NCBI Taxonomy" id="5270"/>
    <lineage>
        <taxon>Eukaryota</taxon>
        <taxon>Fungi</taxon>
        <taxon>Dikarya</taxon>
        <taxon>Basidiomycota</taxon>
        <taxon>Ustilaginomycotina</taxon>
        <taxon>Ustilaginomycetes</taxon>
        <taxon>Ustilaginales</taxon>
        <taxon>Ustilaginaceae</taxon>
        <taxon>Mycosarcoma</taxon>
    </lineage>
</organism>
<name>SHO1_MYCMD</name>